<protein>
    <recommendedName>
        <fullName evidence="1">GTP 3',8-cyclase 1</fullName>
        <ecNumber evidence="1">4.1.99.22</ecNumber>
    </recommendedName>
    <alternativeName>
        <fullName evidence="1">Molybdenum cofactor biosynthesis protein A 1</fullName>
    </alternativeName>
</protein>
<feature type="chain" id="PRO_0000427780" description="GTP 3',8-cyclase 1">
    <location>
        <begin position="1"/>
        <end position="359"/>
    </location>
</feature>
<feature type="domain" description="Radical SAM core" evidence="2">
    <location>
        <begin position="21"/>
        <end position="241"/>
    </location>
</feature>
<feature type="binding site" evidence="1">
    <location>
        <position position="30"/>
    </location>
    <ligand>
        <name>GTP</name>
        <dbReference type="ChEBI" id="CHEBI:37565"/>
    </ligand>
</feature>
<feature type="binding site" evidence="1">
    <location>
        <position position="37"/>
    </location>
    <ligand>
        <name>[4Fe-4S] cluster</name>
        <dbReference type="ChEBI" id="CHEBI:49883"/>
        <label>1</label>
        <note>4Fe-4S-S-AdoMet</note>
    </ligand>
</feature>
<feature type="binding site" evidence="1">
    <location>
        <position position="41"/>
    </location>
    <ligand>
        <name>[4Fe-4S] cluster</name>
        <dbReference type="ChEBI" id="CHEBI:49883"/>
        <label>1</label>
        <note>4Fe-4S-S-AdoMet</note>
    </ligand>
</feature>
<feature type="binding site" evidence="1">
    <location>
        <position position="43"/>
    </location>
    <ligand>
        <name>S-adenosyl-L-methionine</name>
        <dbReference type="ChEBI" id="CHEBI:59789"/>
    </ligand>
</feature>
<feature type="binding site" evidence="1">
    <location>
        <position position="44"/>
    </location>
    <ligand>
        <name>[4Fe-4S] cluster</name>
        <dbReference type="ChEBI" id="CHEBI:49883"/>
        <label>1</label>
        <note>4Fe-4S-S-AdoMet</note>
    </ligand>
</feature>
<feature type="binding site" evidence="1">
    <location>
        <position position="80"/>
    </location>
    <ligand>
        <name>GTP</name>
        <dbReference type="ChEBI" id="CHEBI:37565"/>
    </ligand>
</feature>
<feature type="binding site" evidence="1">
    <location>
        <position position="84"/>
    </location>
    <ligand>
        <name>S-adenosyl-L-methionine</name>
        <dbReference type="ChEBI" id="CHEBI:59789"/>
    </ligand>
</feature>
<feature type="binding site" evidence="1">
    <location>
        <position position="115"/>
    </location>
    <ligand>
        <name>GTP</name>
        <dbReference type="ChEBI" id="CHEBI:37565"/>
    </ligand>
</feature>
<feature type="binding site" evidence="1">
    <location>
        <position position="139"/>
    </location>
    <ligand>
        <name>S-adenosyl-L-methionine</name>
        <dbReference type="ChEBI" id="CHEBI:59789"/>
    </ligand>
</feature>
<feature type="binding site" evidence="1">
    <location>
        <position position="176"/>
    </location>
    <ligand>
        <name>GTP</name>
        <dbReference type="ChEBI" id="CHEBI:37565"/>
    </ligand>
</feature>
<feature type="binding site" evidence="1">
    <location>
        <position position="210"/>
    </location>
    <ligand>
        <name>S-adenosyl-L-methionine</name>
        <dbReference type="ChEBI" id="CHEBI:59789"/>
    </ligand>
</feature>
<feature type="binding site" evidence="1">
    <location>
        <position position="273"/>
    </location>
    <ligand>
        <name>[4Fe-4S] cluster</name>
        <dbReference type="ChEBI" id="CHEBI:49883"/>
        <label>2</label>
        <note>4Fe-4S-substrate</note>
    </ligand>
</feature>
<feature type="binding site" evidence="1">
    <location>
        <position position="276"/>
    </location>
    <ligand>
        <name>[4Fe-4S] cluster</name>
        <dbReference type="ChEBI" id="CHEBI:49883"/>
        <label>2</label>
        <note>4Fe-4S-substrate</note>
    </ligand>
</feature>
<feature type="binding site" evidence="1">
    <location>
        <begin position="278"/>
        <end position="280"/>
    </location>
    <ligand>
        <name>GTP</name>
        <dbReference type="ChEBI" id="CHEBI:37565"/>
    </ligand>
</feature>
<feature type="binding site" evidence="1">
    <location>
        <position position="290"/>
    </location>
    <ligand>
        <name>[4Fe-4S] cluster</name>
        <dbReference type="ChEBI" id="CHEBI:49883"/>
        <label>2</label>
        <note>4Fe-4S-substrate</note>
    </ligand>
</feature>
<organism>
    <name type="scientific">Mycobacterium tuberculosis (strain CDC 1551 / Oshkosh)</name>
    <dbReference type="NCBI Taxonomy" id="83331"/>
    <lineage>
        <taxon>Bacteria</taxon>
        <taxon>Bacillati</taxon>
        <taxon>Actinomycetota</taxon>
        <taxon>Actinomycetes</taxon>
        <taxon>Mycobacteriales</taxon>
        <taxon>Mycobacteriaceae</taxon>
        <taxon>Mycobacterium</taxon>
        <taxon>Mycobacterium tuberculosis complex</taxon>
    </lineage>
</organism>
<evidence type="ECO:0000255" key="1">
    <source>
        <dbReference type="HAMAP-Rule" id="MF_01225"/>
    </source>
</evidence>
<evidence type="ECO:0000255" key="2">
    <source>
        <dbReference type="PROSITE-ProRule" id="PRU01266"/>
    </source>
</evidence>
<evidence type="ECO:0000305" key="3"/>
<keyword id="KW-0004">4Fe-4S</keyword>
<keyword id="KW-0342">GTP-binding</keyword>
<keyword id="KW-0408">Iron</keyword>
<keyword id="KW-0411">Iron-sulfur</keyword>
<keyword id="KW-0456">Lyase</keyword>
<keyword id="KW-0479">Metal-binding</keyword>
<keyword id="KW-0501">Molybdenum cofactor biosynthesis</keyword>
<keyword id="KW-0547">Nucleotide-binding</keyword>
<keyword id="KW-1185">Reference proteome</keyword>
<keyword id="KW-0949">S-adenosyl-L-methionine</keyword>
<name>MOAA1_MYCTO</name>
<dbReference type="EC" id="4.1.99.22" evidence="1"/>
<dbReference type="EMBL" id="AE000516">
    <property type="protein sequence ID" value="AAK47531.1"/>
    <property type="status" value="ALT_INIT"/>
    <property type="molecule type" value="Genomic_DNA"/>
</dbReference>
<dbReference type="PIR" id="D70920">
    <property type="entry name" value="D70920"/>
</dbReference>
<dbReference type="RefSeq" id="WP_003900633.1">
    <property type="nucleotide sequence ID" value="NZ_KK341227.1"/>
</dbReference>
<dbReference type="SMR" id="P9WJS2"/>
<dbReference type="GeneID" id="45427108"/>
<dbReference type="KEGG" id="mtc:MT3192"/>
<dbReference type="PATRIC" id="fig|83331.31.peg.3442"/>
<dbReference type="HOGENOM" id="CLU_009273_0_1_11"/>
<dbReference type="UniPathway" id="UPA00344"/>
<dbReference type="Proteomes" id="UP000001020">
    <property type="component" value="Chromosome"/>
</dbReference>
<dbReference type="GO" id="GO:0051539">
    <property type="term" value="F:4 iron, 4 sulfur cluster binding"/>
    <property type="evidence" value="ECO:0007669"/>
    <property type="project" value="UniProtKB-UniRule"/>
</dbReference>
<dbReference type="GO" id="GO:0061799">
    <property type="term" value="F:cyclic pyranopterin monophosphate synthase activity"/>
    <property type="evidence" value="ECO:0007669"/>
    <property type="project" value="TreeGrafter"/>
</dbReference>
<dbReference type="GO" id="GO:0061798">
    <property type="term" value="F:GTP 3',8'-cyclase activity"/>
    <property type="evidence" value="ECO:0007669"/>
    <property type="project" value="UniProtKB-UniRule"/>
</dbReference>
<dbReference type="GO" id="GO:0005525">
    <property type="term" value="F:GTP binding"/>
    <property type="evidence" value="ECO:0007669"/>
    <property type="project" value="UniProtKB-UniRule"/>
</dbReference>
<dbReference type="GO" id="GO:0046872">
    <property type="term" value="F:metal ion binding"/>
    <property type="evidence" value="ECO:0007669"/>
    <property type="project" value="UniProtKB-KW"/>
</dbReference>
<dbReference type="GO" id="GO:1904047">
    <property type="term" value="F:S-adenosyl-L-methionine binding"/>
    <property type="evidence" value="ECO:0007669"/>
    <property type="project" value="UniProtKB-UniRule"/>
</dbReference>
<dbReference type="GO" id="GO:0006777">
    <property type="term" value="P:Mo-molybdopterin cofactor biosynthetic process"/>
    <property type="evidence" value="ECO:0007669"/>
    <property type="project" value="UniProtKB-UniRule"/>
</dbReference>
<dbReference type="CDD" id="cd01335">
    <property type="entry name" value="Radical_SAM"/>
    <property type="match status" value="1"/>
</dbReference>
<dbReference type="CDD" id="cd21117">
    <property type="entry name" value="Twitch_MoaA"/>
    <property type="match status" value="1"/>
</dbReference>
<dbReference type="FunFam" id="3.20.20.70:FF:000333">
    <property type="entry name" value="GTP 3',8-cyclase 1"/>
    <property type="match status" value="1"/>
</dbReference>
<dbReference type="Gene3D" id="3.20.20.70">
    <property type="entry name" value="Aldolase class I"/>
    <property type="match status" value="1"/>
</dbReference>
<dbReference type="HAMAP" id="MF_01225_B">
    <property type="entry name" value="MoaA_B"/>
    <property type="match status" value="1"/>
</dbReference>
<dbReference type="InterPro" id="IPR013785">
    <property type="entry name" value="Aldolase_TIM"/>
</dbReference>
<dbReference type="InterPro" id="IPR006638">
    <property type="entry name" value="Elp3/MiaA/NifB-like_rSAM"/>
</dbReference>
<dbReference type="InterPro" id="IPR013483">
    <property type="entry name" value="MoaA"/>
</dbReference>
<dbReference type="InterPro" id="IPR000385">
    <property type="entry name" value="MoaA_NifB_PqqE_Fe-S-bd_CS"/>
</dbReference>
<dbReference type="InterPro" id="IPR010505">
    <property type="entry name" value="MoaA_twitch"/>
</dbReference>
<dbReference type="InterPro" id="IPR050105">
    <property type="entry name" value="MoCo_biosynth_MoaA/MoaC"/>
</dbReference>
<dbReference type="InterPro" id="IPR007197">
    <property type="entry name" value="rSAM"/>
</dbReference>
<dbReference type="NCBIfam" id="TIGR02666">
    <property type="entry name" value="moaA"/>
    <property type="match status" value="1"/>
</dbReference>
<dbReference type="PANTHER" id="PTHR22960:SF0">
    <property type="entry name" value="MOLYBDENUM COFACTOR BIOSYNTHESIS PROTEIN 1"/>
    <property type="match status" value="1"/>
</dbReference>
<dbReference type="PANTHER" id="PTHR22960">
    <property type="entry name" value="MOLYBDOPTERIN COFACTOR SYNTHESIS PROTEIN A"/>
    <property type="match status" value="1"/>
</dbReference>
<dbReference type="Pfam" id="PF06463">
    <property type="entry name" value="Mob_synth_C"/>
    <property type="match status" value="1"/>
</dbReference>
<dbReference type="Pfam" id="PF04055">
    <property type="entry name" value="Radical_SAM"/>
    <property type="match status" value="1"/>
</dbReference>
<dbReference type="SFLD" id="SFLDG01383">
    <property type="entry name" value="cyclic_pyranopterin_phosphate"/>
    <property type="match status" value="1"/>
</dbReference>
<dbReference type="SFLD" id="SFLDG01216">
    <property type="entry name" value="thioether_bond_formation_requi"/>
    <property type="match status" value="1"/>
</dbReference>
<dbReference type="SMART" id="SM00729">
    <property type="entry name" value="Elp3"/>
    <property type="match status" value="1"/>
</dbReference>
<dbReference type="SUPFAM" id="SSF102114">
    <property type="entry name" value="Radical SAM enzymes"/>
    <property type="match status" value="1"/>
</dbReference>
<dbReference type="PROSITE" id="PS01305">
    <property type="entry name" value="MOAA_NIFB_PQQE"/>
    <property type="match status" value="1"/>
</dbReference>
<dbReference type="PROSITE" id="PS51918">
    <property type="entry name" value="RADICAL_SAM"/>
    <property type="match status" value="1"/>
</dbReference>
<accession>P9WJS2</accession>
<accession>L0TEC9</accession>
<accession>O05786</accession>
<comment type="function">
    <text evidence="1">Catalyzes the cyclization of GTP to (8S)-3',8-cyclo-7,8-dihydroguanosine 5'-triphosphate.</text>
</comment>
<comment type="catalytic activity">
    <reaction evidence="1">
        <text>GTP + AH2 + S-adenosyl-L-methionine = (8S)-3',8-cyclo-7,8-dihydroguanosine 5'-triphosphate + 5'-deoxyadenosine + L-methionine + A + H(+)</text>
        <dbReference type="Rhea" id="RHEA:49576"/>
        <dbReference type="ChEBI" id="CHEBI:13193"/>
        <dbReference type="ChEBI" id="CHEBI:15378"/>
        <dbReference type="ChEBI" id="CHEBI:17319"/>
        <dbReference type="ChEBI" id="CHEBI:17499"/>
        <dbReference type="ChEBI" id="CHEBI:37565"/>
        <dbReference type="ChEBI" id="CHEBI:57844"/>
        <dbReference type="ChEBI" id="CHEBI:59789"/>
        <dbReference type="ChEBI" id="CHEBI:131766"/>
        <dbReference type="EC" id="4.1.99.22"/>
    </reaction>
</comment>
<comment type="cofactor">
    <cofactor evidence="1">
        <name>[4Fe-4S] cluster</name>
        <dbReference type="ChEBI" id="CHEBI:49883"/>
    </cofactor>
    <text evidence="1">Binds 2 [4Fe-4S] clusters. Binds 1 [4Fe-4S] cluster coordinated with 3 cysteines and an exchangeable S-adenosyl-L-methionine and 1 [4Fe-4S] cluster coordinated with 3 cysteines and the GTP-derived substrate.</text>
</comment>
<comment type="pathway">
    <text evidence="1">Cofactor biosynthesis; molybdopterin biosynthesis.</text>
</comment>
<comment type="subunit">
    <text evidence="1">Monomer and homodimer.</text>
</comment>
<comment type="similarity">
    <text evidence="1">Belongs to the radical SAM superfamily. MoaA family.</text>
</comment>
<comment type="sequence caution" evidence="3">
    <conflict type="erroneous initiation">
        <sequence resource="EMBL-CDS" id="AAK47531"/>
    </conflict>
</comment>
<proteinExistence type="inferred from homology"/>
<reference key="1">
    <citation type="journal article" date="2002" name="J. Bacteriol.">
        <title>Whole-genome comparison of Mycobacterium tuberculosis clinical and laboratory strains.</title>
        <authorList>
            <person name="Fleischmann R.D."/>
            <person name="Alland D."/>
            <person name="Eisen J.A."/>
            <person name="Carpenter L."/>
            <person name="White O."/>
            <person name="Peterson J.D."/>
            <person name="DeBoy R.T."/>
            <person name="Dodson R.J."/>
            <person name="Gwinn M.L."/>
            <person name="Haft D.H."/>
            <person name="Hickey E.K."/>
            <person name="Kolonay J.F."/>
            <person name="Nelson W.C."/>
            <person name="Umayam L.A."/>
            <person name="Ermolaeva M.D."/>
            <person name="Salzberg S.L."/>
            <person name="Delcher A."/>
            <person name="Utterback T.R."/>
            <person name="Weidman J.F."/>
            <person name="Khouri H.M."/>
            <person name="Gill J."/>
            <person name="Mikula A."/>
            <person name="Bishai W."/>
            <person name="Jacobs W.R. Jr."/>
            <person name="Venter J.C."/>
            <person name="Fraser C.M."/>
        </authorList>
    </citation>
    <scope>NUCLEOTIDE SEQUENCE [LARGE SCALE GENOMIC DNA]</scope>
    <source>
        <strain>CDC 1551 / Oshkosh</strain>
    </source>
</reference>
<gene>
    <name evidence="1" type="primary">moaA1</name>
    <name type="synonym">moaA</name>
    <name type="ordered locus">MT3192</name>
</gene>
<sequence>MSTPTLPDMVAPSPRVRVKDRCRRMMGDLRLSVIDQCNLRCRYCMPEEHYTWLPRQDLLSVKEISAIVDVFLSVGVSKVRITGGEPLIRPDLPEIVRTLSAKVGEDSGLRDLAITTNGVLLADRVDGLKAAGMKRITVSLDTLQPERFKAISQRNSHDKVIAGIKAVAAAGFTDTKIDTTVMRGANHDELADLIEFARTVNAEVRFIEYMDVGGATHWAWEKVFTKANMLESLEKRYGRIEPLPKHDTAPANRYALPDGTTFGIIASTTEPFCATCDRSRLTADGLWLHCLYAISGINLREPLRAGATHDDLVETVTTGWRRRTDRGAEQRLAQRERGVFLPLSTLKADPHLEMHTRGG</sequence>